<sequence length="859" mass="94317">MSNFWDNNKGSIMSGLASAGKYGYQGTKYVAKAGYKASKTHYNNSQGKKNVEESSDEGYMSESASDLSHLQDPKMFPPPPLKPGQKQISSDGTVIDAGNAPLVHTAAVPMANAASHPGLPPRTPTANSIPMLTQQQTYPPQNMYQQQPPPQPPMQQQVPPQVQQIPQPGQQLSQQPMQQLHPEPIPPRNYQTAVETPPQYTPIPSLNAQHVQEQLQQQLQQQFQPSMGTPDQGQALVQGSPLASQQQVQPQVQPQTSQYQSQQVPSPQIQNQGQLMQQQQNYFQPQLQQTQPQQYIDSYAQYQQQGQQQVQPQIQQMQPQVQQQPIQQPPQAQPQYQQSYPPQYQQQTQSLQPQYQQPVQAPIVQPPIPQQDYYQQQQQTPYQPASQPQMYQQQPGQQNPIVSPAPALAQRPSLSNIQTSTGHGASQESTVSSTASITVKPYVWMDSDERKEKKKIELQPVSAIDIHQVTPPLHKDRSSSSSLKSSSRDASVLEKGKSLSPGPAPLPSRNVRPPTSVDHTKPNTVTPAAATGTSAEVGDDQVRPNESITGVYHESTVSFPPPPKPTHNGLPMSPPVSHARPTVSHKPPNPPRPPVSSKPTLPPIQTHQRITSTERAPIGRPKEEVHQAAVLGAYNYNVDVGFAPPPKPPRSMVTSPANDPQTSLSSRRPSQEYGGVAKASSRTLPPPPGQQNGSLPQHTEEEPASNSSESAPPAMRMLPLADLPPPPQRTDSHTTTSEQPAVPSRTFDPPPRYSTNETIPPTYNIDEDIQTAHKKPPPKVPKKKVSLRAGNKPPVPKKKASLSGTATHEHNESARTSLTQETNNSIDDDDDDDSGEGNSFRKYLRHVVPAERDHIHKSK</sequence>
<name>AIM3_KLULA</name>
<accession>Q6CVT9</accession>
<protein>
    <recommendedName>
        <fullName>Altered inheritance of mitochondria protein 3</fullName>
    </recommendedName>
</protein>
<organism>
    <name type="scientific">Kluyveromyces lactis (strain ATCC 8585 / CBS 2359 / DSM 70799 / NBRC 1267 / NRRL Y-1140 / WM37)</name>
    <name type="common">Yeast</name>
    <name type="synonym">Candida sphaerica</name>
    <dbReference type="NCBI Taxonomy" id="284590"/>
    <lineage>
        <taxon>Eukaryota</taxon>
        <taxon>Fungi</taxon>
        <taxon>Dikarya</taxon>
        <taxon>Ascomycota</taxon>
        <taxon>Saccharomycotina</taxon>
        <taxon>Saccharomycetes</taxon>
        <taxon>Saccharomycetales</taxon>
        <taxon>Saccharomycetaceae</taxon>
        <taxon>Kluyveromyces</taxon>
    </lineage>
</organism>
<keyword id="KW-0472">Membrane</keyword>
<keyword id="KW-1185">Reference proteome</keyword>
<proteinExistence type="inferred from homology"/>
<gene>
    <name type="primary">AIM3</name>
    <name type="ordered locus">KLLA0B09460g</name>
</gene>
<feature type="chain" id="PRO_0000399601" description="Altered inheritance of mitochondria protein 3">
    <location>
        <begin position="1"/>
        <end position="859"/>
    </location>
</feature>
<feature type="region of interest" description="Disordered" evidence="2">
    <location>
        <begin position="38"/>
        <end position="95"/>
    </location>
</feature>
<feature type="region of interest" description="Disordered" evidence="2">
    <location>
        <begin position="137"/>
        <end position="290"/>
    </location>
</feature>
<feature type="region of interest" description="Disordered" evidence="2">
    <location>
        <begin position="320"/>
        <end position="358"/>
    </location>
</feature>
<feature type="region of interest" description="Disordered" evidence="2">
    <location>
        <begin position="372"/>
        <end position="624"/>
    </location>
</feature>
<feature type="region of interest" description="Disordered" evidence="2">
    <location>
        <begin position="638"/>
        <end position="859"/>
    </location>
</feature>
<feature type="compositionally biased region" description="Low complexity" evidence="2">
    <location>
        <begin position="137"/>
        <end position="146"/>
    </location>
</feature>
<feature type="compositionally biased region" description="Low complexity" evidence="2">
    <location>
        <begin position="154"/>
        <end position="179"/>
    </location>
</feature>
<feature type="compositionally biased region" description="Low complexity" evidence="2">
    <location>
        <begin position="209"/>
        <end position="224"/>
    </location>
</feature>
<feature type="compositionally biased region" description="Polar residues" evidence="2">
    <location>
        <begin position="225"/>
        <end position="237"/>
    </location>
</feature>
<feature type="compositionally biased region" description="Low complexity" evidence="2">
    <location>
        <begin position="240"/>
        <end position="290"/>
    </location>
</feature>
<feature type="compositionally biased region" description="Low complexity" evidence="2">
    <location>
        <begin position="333"/>
        <end position="358"/>
    </location>
</feature>
<feature type="compositionally biased region" description="Low complexity" evidence="2">
    <location>
        <begin position="372"/>
        <end position="400"/>
    </location>
</feature>
<feature type="compositionally biased region" description="Polar residues" evidence="2">
    <location>
        <begin position="412"/>
        <end position="437"/>
    </location>
</feature>
<feature type="compositionally biased region" description="Basic and acidic residues" evidence="2">
    <location>
        <begin position="447"/>
        <end position="457"/>
    </location>
</feature>
<feature type="compositionally biased region" description="Low complexity" evidence="2">
    <location>
        <begin position="479"/>
        <end position="490"/>
    </location>
</feature>
<feature type="compositionally biased region" description="Polar residues" evidence="2">
    <location>
        <begin position="522"/>
        <end position="534"/>
    </location>
</feature>
<feature type="compositionally biased region" description="Pro residues" evidence="2">
    <location>
        <begin position="587"/>
        <end position="602"/>
    </location>
</feature>
<feature type="compositionally biased region" description="Polar residues" evidence="2">
    <location>
        <begin position="605"/>
        <end position="614"/>
    </location>
</feature>
<feature type="compositionally biased region" description="Polar residues" evidence="2">
    <location>
        <begin position="652"/>
        <end position="668"/>
    </location>
</feature>
<feature type="compositionally biased region" description="Low complexity" evidence="2">
    <location>
        <begin position="704"/>
        <end position="714"/>
    </location>
</feature>
<feature type="compositionally biased region" description="Basic residues" evidence="2">
    <location>
        <begin position="772"/>
        <end position="786"/>
    </location>
</feature>
<feature type="compositionally biased region" description="Polar residues" evidence="2">
    <location>
        <begin position="814"/>
        <end position="825"/>
    </location>
</feature>
<feature type="compositionally biased region" description="Acidic residues" evidence="2">
    <location>
        <begin position="826"/>
        <end position="835"/>
    </location>
</feature>
<feature type="compositionally biased region" description="Basic and acidic residues" evidence="2">
    <location>
        <begin position="848"/>
        <end position="859"/>
    </location>
</feature>
<comment type="subcellular location">
    <subcellularLocation>
        <location evidence="1">Membrane raft</location>
        <topology evidence="1">Peripheral membrane protein</topology>
    </subcellularLocation>
    <text evidence="1">Localizes within detergent-insoluble glycolipid-enriched membranes.</text>
</comment>
<comment type="similarity">
    <text evidence="3">Belongs to the AIM3 family.</text>
</comment>
<reference key="1">
    <citation type="journal article" date="2004" name="Nature">
        <title>Genome evolution in yeasts.</title>
        <authorList>
            <person name="Dujon B."/>
            <person name="Sherman D."/>
            <person name="Fischer G."/>
            <person name="Durrens P."/>
            <person name="Casaregola S."/>
            <person name="Lafontaine I."/>
            <person name="de Montigny J."/>
            <person name="Marck C."/>
            <person name="Neuveglise C."/>
            <person name="Talla E."/>
            <person name="Goffard N."/>
            <person name="Frangeul L."/>
            <person name="Aigle M."/>
            <person name="Anthouard V."/>
            <person name="Babour A."/>
            <person name="Barbe V."/>
            <person name="Barnay S."/>
            <person name="Blanchin S."/>
            <person name="Beckerich J.-M."/>
            <person name="Beyne E."/>
            <person name="Bleykasten C."/>
            <person name="Boisrame A."/>
            <person name="Boyer J."/>
            <person name="Cattolico L."/>
            <person name="Confanioleri F."/>
            <person name="de Daruvar A."/>
            <person name="Despons L."/>
            <person name="Fabre E."/>
            <person name="Fairhead C."/>
            <person name="Ferry-Dumazet H."/>
            <person name="Groppi A."/>
            <person name="Hantraye F."/>
            <person name="Hennequin C."/>
            <person name="Jauniaux N."/>
            <person name="Joyet P."/>
            <person name="Kachouri R."/>
            <person name="Kerrest A."/>
            <person name="Koszul R."/>
            <person name="Lemaire M."/>
            <person name="Lesur I."/>
            <person name="Ma L."/>
            <person name="Muller H."/>
            <person name="Nicaud J.-M."/>
            <person name="Nikolski M."/>
            <person name="Oztas S."/>
            <person name="Ozier-Kalogeropoulos O."/>
            <person name="Pellenz S."/>
            <person name="Potier S."/>
            <person name="Richard G.-F."/>
            <person name="Straub M.-L."/>
            <person name="Suleau A."/>
            <person name="Swennen D."/>
            <person name="Tekaia F."/>
            <person name="Wesolowski-Louvel M."/>
            <person name="Westhof E."/>
            <person name="Wirth B."/>
            <person name="Zeniou-Meyer M."/>
            <person name="Zivanovic Y."/>
            <person name="Bolotin-Fukuhara M."/>
            <person name="Thierry A."/>
            <person name="Bouchier C."/>
            <person name="Caudron B."/>
            <person name="Scarpelli C."/>
            <person name="Gaillardin C."/>
            <person name="Weissenbach J."/>
            <person name="Wincker P."/>
            <person name="Souciet J.-L."/>
        </authorList>
    </citation>
    <scope>NUCLEOTIDE SEQUENCE [LARGE SCALE GENOMIC DNA]</scope>
    <source>
        <strain>ATCC 8585 / CBS 2359 / DSM 70799 / NBRC 1267 / NRRL Y-1140 / WM37</strain>
    </source>
</reference>
<evidence type="ECO:0000250" key="1"/>
<evidence type="ECO:0000256" key="2">
    <source>
        <dbReference type="SAM" id="MobiDB-lite"/>
    </source>
</evidence>
<evidence type="ECO:0000305" key="3"/>
<dbReference type="EMBL" id="CR382122">
    <property type="protein sequence ID" value="CAH02343.1"/>
    <property type="molecule type" value="Genomic_DNA"/>
</dbReference>
<dbReference type="RefSeq" id="XP_451950.1">
    <property type="nucleotide sequence ID" value="XM_451950.1"/>
</dbReference>
<dbReference type="FunCoup" id="Q6CVT9">
    <property type="interactions" value="55"/>
</dbReference>
<dbReference type="STRING" id="284590.Q6CVT9"/>
<dbReference type="PaxDb" id="284590-Q6CVT9"/>
<dbReference type="KEGG" id="kla:KLLA0_B09460g"/>
<dbReference type="eggNOG" id="ENOG502S02E">
    <property type="taxonomic scope" value="Eukaryota"/>
</dbReference>
<dbReference type="HOGENOM" id="CLU_324433_0_0_1"/>
<dbReference type="InParanoid" id="Q6CVT9"/>
<dbReference type="OMA" id="DNPFRRY"/>
<dbReference type="Proteomes" id="UP000000598">
    <property type="component" value="Chromosome B"/>
</dbReference>
<dbReference type="GO" id="GO:0030479">
    <property type="term" value="C:actin cortical patch"/>
    <property type="evidence" value="ECO:0007669"/>
    <property type="project" value="InterPro"/>
</dbReference>
<dbReference type="GO" id="GO:0045121">
    <property type="term" value="C:membrane raft"/>
    <property type="evidence" value="ECO:0007669"/>
    <property type="project" value="UniProtKB-SubCell"/>
</dbReference>
<dbReference type="GO" id="GO:0051016">
    <property type="term" value="P:barbed-end actin filament capping"/>
    <property type="evidence" value="ECO:0007669"/>
    <property type="project" value="InterPro"/>
</dbReference>
<dbReference type="InterPro" id="IPR031370">
    <property type="entry name" value="Aim3"/>
</dbReference>
<dbReference type="Pfam" id="PF17096">
    <property type="entry name" value="AIM3"/>
    <property type="match status" value="1"/>
</dbReference>